<evidence type="ECO:0000255" key="1">
    <source>
        <dbReference type="HAMAP-Rule" id="MF_03140"/>
    </source>
</evidence>
<evidence type="ECO:0000256" key="2">
    <source>
        <dbReference type="SAM" id="MobiDB-lite"/>
    </source>
</evidence>
<dbReference type="EC" id="3.1.-.-" evidence="1"/>
<dbReference type="EMBL" id="DS239429">
    <property type="protein sequence ID" value="EDP30068.1"/>
    <property type="molecule type" value="Genomic_DNA"/>
</dbReference>
<dbReference type="SMR" id="A8QCH0"/>
<dbReference type="FunCoup" id="A8QCH0">
    <property type="interactions" value="1978"/>
</dbReference>
<dbReference type="STRING" id="6279.A8QCH0"/>
<dbReference type="EnsemblMetazoa" id="Bm13951a.1">
    <property type="protein sequence ID" value="Bm13951a.1"/>
    <property type="gene ID" value="WBGene00234212"/>
</dbReference>
<dbReference type="GeneID" id="6104806"/>
<dbReference type="KEGG" id="bmy:BM_BM13951"/>
<dbReference type="CTD" id="6104806"/>
<dbReference type="WormBase" id="Bm13951a">
    <property type="protein sequence ID" value="BM27816"/>
    <property type="gene ID" value="WBGene00234212"/>
    <property type="gene designation" value="Bma-crn-1"/>
</dbReference>
<dbReference type="HOGENOM" id="CLU_032444_2_0_1"/>
<dbReference type="InParanoid" id="A8QCH0"/>
<dbReference type="OMA" id="MGIPWVQ"/>
<dbReference type="OrthoDB" id="1937206at2759"/>
<dbReference type="Proteomes" id="UP000006672">
    <property type="component" value="Unassembled WGS sequence"/>
</dbReference>
<dbReference type="GO" id="GO:0005739">
    <property type="term" value="C:mitochondrion"/>
    <property type="evidence" value="ECO:0007669"/>
    <property type="project" value="UniProtKB-SubCell"/>
</dbReference>
<dbReference type="GO" id="GO:0005730">
    <property type="term" value="C:nucleolus"/>
    <property type="evidence" value="ECO:0007669"/>
    <property type="project" value="UniProtKB-SubCell"/>
</dbReference>
<dbReference type="GO" id="GO:0005654">
    <property type="term" value="C:nucleoplasm"/>
    <property type="evidence" value="ECO:0007669"/>
    <property type="project" value="UniProtKB-SubCell"/>
</dbReference>
<dbReference type="GO" id="GO:0008409">
    <property type="term" value="F:5'-3' exonuclease activity"/>
    <property type="evidence" value="ECO:0007669"/>
    <property type="project" value="UniProtKB-UniRule"/>
</dbReference>
<dbReference type="GO" id="GO:0017108">
    <property type="term" value="F:5'-flap endonuclease activity"/>
    <property type="evidence" value="ECO:0007669"/>
    <property type="project" value="UniProtKB-UniRule"/>
</dbReference>
<dbReference type="GO" id="GO:0003677">
    <property type="term" value="F:DNA binding"/>
    <property type="evidence" value="ECO:0007669"/>
    <property type="project" value="UniProtKB-UniRule"/>
</dbReference>
<dbReference type="GO" id="GO:0000287">
    <property type="term" value="F:magnesium ion binding"/>
    <property type="evidence" value="ECO:0007669"/>
    <property type="project" value="UniProtKB-UniRule"/>
</dbReference>
<dbReference type="GO" id="GO:0030145">
    <property type="term" value="F:manganese ion binding"/>
    <property type="evidence" value="ECO:0007669"/>
    <property type="project" value="TreeGrafter"/>
</dbReference>
<dbReference type="GO" id="GO:0004523">
    <property type="term" value="F:RNA-DNA hybrid ribonuclease activity"/>
    <property type="evidence" value="ECO:0007669"/>
    <property type="project" value="TreeGrafter"/>
</dbReference>
<dbReference type="GO" id="GO:0006309">
    <property type="term" value="P:apoptotic DNA fragmentation"/>
    <property type="evidence" value="ECO:0007669"/>
    <property type="project" value="EnsemblMetazoa"/>
</dbReference>
<dbReference type="GO" id="GO:0006284">
    <property type="term" value="P:base-excision repair"/>
    <property type="evidence" value="ECO:0007669"/>
    <property type="project" value="UniProtKB-UniRule"/>
</dbReference>
<dbReference type="GO" id="GO:0043137">
    <property type="term" value="P:DNA replication, removal of RNA primer"/>
    <property type="evidence" value="ECO:0007669"/>
    <property type="project" value="UniProtKB-UniRule"/>
</dbReference>
<dbReference type="CDD" id="cd09907">
    <property type="entry name" value="H3TH_FEN1-Euk"/>
    <property type="match status" value="1"/>
</dbReference>
<dbReference type="CDD" id="cd09867">
    <property type="entry name" value="PIN_FEN1"/>
    <property type="match status" value="1"/>
</dbReference>
<dbReference type="FunFam" id="1.10.150.20:FF:000009">
    <property type="entry name" value="Flap endonuclease 1"/>
    <property type="match status" value="1"/>
</dbReference>
<dbReference type="FunFam" id="3.40.50.1010:FF:000003">
    <property type="entry name" value="Flap endonuclease 1"/>
    <property type="match status" value="1"/>
</dbReference>
<dbReference type="Gene3D" id="1.10.150.20">
    <property type="entry name" value="5' to 3' exonuclease, C-terminal subdomain"/>
    <property type="match status" value="1"/>
</dbReference>
<dbReference type="Gene3D" id="3.40.50.1010">
    <property type="entry name" value="5'-nuclease"/>
    <property type="match status" value="1"/>
</dbReference>
<dbReference type="HAMAP" id="MF_00614">
    <property type="entry name" value="Fen"/>
    <property type="match status" value="1"/>
</dbReference>
<dbReference type="InterPro" id="IPR036279">
    <property type="entry name" value="5-3_exonuclease_C_sf"/>
</dbReference>
<dbReference type="InterPro" id="IPR023426">
    <property type="entry name" value="Flap_endonuc"/>
</dbReference>
<dbReference type="InterPro" id="IPR008918">
    <property type="entry name" value="HhH2"/>
</dbReference>
<dbReference type="InterPro" id="IPR029060">
    <property type="entry name" value="PIN-like_dom_sf"/>
</dbReference>
<dbReference type="InterPro" id="IPR006086">
    <property type="entry name" value="XPG-I_dom"/>
</dbReference>
<dbReference type="InterPro" id="IPR006084">
    <property type="entry name" value="XPG/Rad2"/>
</dbReference>
<dbReference type="InterPro" id="IPR019974">
    <property type="entry name" value="XPG_CS"/>
</dbReference>
<dbReference type="InterPro" id="IPR006085">
    <property type="entry name" value="XPG_DNA_repair_N"/>
</dbReference>
<dbReference type="PANTHER" id="PTHR11081:SF9">
    <property type="entry name" value="FLAP ENDONUCLEASE 1"/>
    <property type="match status" value="1"/>
</dbReference>
<dbReference type="PANTHER" id="PTHR11081">
    <property type="entry name" value="FLAP ENDONUCLEASE FAMILY MEMBER"/>
    <property type="match status" value="1"/>
</dbReference>
<dbReference type="Pfam" id="PF00867">
    <property type="entry name" value="XPG_I"/>
    <property type="match status" value="1"/>
</dbReference>
<dbReference type="Pfam" id="PF00752">
    <property type="entry name" value="XPG_N"/>
    <property type="match status" value="1"/>
</dbReference>
<dbReference type="PRINTS" id="PR00853">
    <property type="entry name" value="XPGRADSUPER"/>
</dbReference>
<dbReference type="SMART" id="SM00279">
    <property type="entry name" value="HhH2"/>
    <property type="match status" value="1"/>
</dbReference>
<dbReference type="SMART" id="SM00484">
    <property type="entry name" value="XPGI"/>
    <property type="match status" value="1"/>
</dbReference>
<dbReference type="SMART" id="SM00485">
    <property type="entry name" value="XPGN"/>
    <property type="match status" value="1"/>
</dbReference>
<dbReference type="SUPFAM" id="SSF47807">
    <property type="entry name" value="5' to 3' exonuclease, C-terminal subdomain"/>
    <property type="match status" value="1"/>
</dbReference>
<dbReference type="SUPFAM" id="SSF88723">
    <property type="entry name" value="PIN domain-like"/>
    <property type="match status" value="1"/>
</dbReference>
<dbReference type="PROSITE" id="PS00841">
    <property type="entry name" value="XPG_1"/>
    <property type="match status" value="1"/>
</dbReference>
<dbReference type="PROSITE" id="PS00842">
    <property type="entry name" value="XPG_2"/>
    <property type="match status" value="1"/>
</dbReference>
<keyword id="KW-0227">DNA damage</keyword>
<keyword id="KW-0234">DNA repair</keyword>
<keyword id="KW-0235">DNA replication</keyword>
<keyword id="KW-0255">Endonuclease</keyword>
<keyword id="KW-0269">Exonuclease</keyword>
<keyword id="KW-0378">Hydrolase</keyword>
<keyword id="KW-0460">Magnesium</keyword>
<keyword id="KW-0479">Metal-binding</keyword>
<keyword id="KW-0496">Mitochondrion</keyword>
<keyword id="KW-0540">Nuclease</keyword>
<keyword id="KW-0539">Nucleus</keyword>
<keyword id="KW-0597">Phosphoprotein</keyword>
<keyword id="KW-1185">Reference proteome</keyword>
<name>FEN1_BRUMA</name>
<organism>
    <name type="scientific">Brugia malayi</name>
    <name type="common">Filarial nematode worm</name>
    <dbReference type="NCBI Taxonomy" id="6279"/>
    <lineage>
        <taxon>Eukaryota</taxon>
        <taxon>Metazoa</taxon>
        <taxon>Ecdysozoa</taxon>
        <taxon>Nematoda</taxon>
        <taxon>Chromadorea</taxon>
        <taxon>Rhabditida</taxon>
        <taxon>Spirurina</taxon>
        <taxon>Spiruromorpha</taxon>
        <taxon>Filarioidea</taxon>
        <taxon>Onchocercidae</taxon>
        <taxon>Brugia</taxon>
    </lineage>
</organism>
<sequence length="378" mass="42844">MGVKDLSKVIGDHSPNSIRLKEFKGYFGRKVAVDASMCLYQFLIAVRQDGSQLQTESGETTSHLLGMFYRTIRMIDNGIKPVYVFDGKPPQMKTSELEKRTERRTEAEKQRNDAVELGDETSVNKFEKRLVKVTKEQSEEAKRLVTLMGIPVLDAPCEAEAQCAALAKAGKVFATVSEDMDALTFGSPILLRQMIASEAKKLPVKEMNLNQVLKDFGMNMGQFVDLCILLGCDYVSTIRGIGPKKAFELIKKYECIENVLETINQTKYPIPQDWQYKEARRLFLEPDVMNCENLELVWKEPDVEGIVQFLCVEKSFNEDRVRGSLTRMQKGRQAAQQARIDSFFSVSKVVTSETTKRKNEEKNNLKKRGPSLGKKAKK</sequence>
<protein>
    <recommendedName>
        <fullName evidence="1">Flap endonuclease 1</fullName>
        <shortName evidence="1">FEN-1</shortName>
        <ecNumber evidence="1">3.1.-.-</ecNumber>
    </recommendedName>
    <alternativeName>
        <fullName evidence="1">Flap structure-specific endonuclease 1</fullName>
    </alternativeName>
</protein>
<accession>A8QCH0</accession>
<gene>
    <name evidence="1" type="primary">FEN1</name>
    <name type="ORF">Bm1_49605</name>
</gene>
<proteinExistence type="inferred from homology"/>
<comment type="function">
    <text evidence="1">Structure-specific nuclease with 5'-flap endonuclease and 5'-3' exonuclease activities involved in DNA replication and repair. During DNA replication, cleaves the 5'-overhanging flap structure that is generated by displacement synthesis when DNA polymerase encounters the 5'-end of a downstream Okazaki fragment. It enters the flap from the 5'-end and then tracks to cleave the flap base, leaving a nick for ligation. Also involved in the long patch base excision repair (LP-BER) pathway, by cleaving within the apurinic/apyrimidinic (AP) site-terminated flap. Acts as a genome stabilization factor that prevents flaps from equilibrating into structures that lead to duplications and deletions. Also possesses 5'-3' exonuclease activity on nicked or gapped double-stranded DNA, and exhibits RNase H activity. Also involved in replication and repair of rDNA and in repairing mitochondrial DNA.</text>
</comment>
<comment type="cofactor">
    <cofactor evidence="1">
        <name>Mg(2+)</name>
        <dbReference type="ChEBI" id="CHEBI:18420"/>
    </cofactor>
    <text evidence="1">Binds 2 magnesium ions per subunit. They probably participate in the reaction catalyzed by the enzyme. May bind an additional third magnesium ion after substrate binding.</text>
</comment>
<comment type="subunit">
    <text evidence="1">Interacts with PCNA. Three molecules of FEN1 bind to one PCNA trimer with each molecule binding to one PCNA monomer. PCNA stimulates the nuclease activity without altering cleavage specificity.</text>
</comment>
<comment type="subcellular location">
    <subcellularLocation>
        <location evidence="1">Nucleus</location>
        <location evidence="1">Nucleolus</location>
    </subcellularLocation>
    <subcellularLocation>
        <location evidence="1">Nucleus</location>
        <location evidence="1">Nucleoplasm</location>
    </subcellularLocation>
    <subcellularLocation>
        <location evidence="1">Mitochondrion</location>
    </subcellularLocation>
    <text evidence="1">Resides mostly in the nucleoli and relocalizes to the nucleoplasm upon DNA damage.</text>
</comment>
<comment type="PTM">
    <text evidence="1">Phosphorylated. Phosphorylation upon DNA damage induces relocalization to the nuclear plasma.</text>
</comment>
<comment type="similarity">
    <text evidence="1">Belongs to the XPG/RAD2 endonuclease family. FEN1 subfamily.</text>
</comment>
<reference key="1">
    <citation type="journal article" date="2007" name="Science">
        <title>Draft genome of the filarial nematode parasite Brugia malayi.</title>
        <authorList>
            <person name="Ghedin E."/>
            <person name="Wang S."/>
            <person name="Spiro D."/>
            <person name="Caler E."/>
            <person name="Zhao Q."/>
            <person name="Crabtree J."/>
            <person name="Allen J.E."/>
            <person name="Delcher A.L."/>
            <person name="Guiliano D.B."/>
            <person name="Miranda-Saavedra D."/>
            <person name="Angiuoli S.V."/>
            <person name="Creasy T."/>
            <person name="Amedeo P."/>
            <person name="Haas B."/>
            <person name="El-Sayed N.M."/>
            <person name="Wortman J.R."/>
            <person name="Feldblyum T."/>
            <person name="Tallon L."/>
            <person name="Schatz M."/>
            <person name="Shumway M."/>
            <person name="Koo H."/>
            <person name="Salzberg S.L."/>
            <person name="Schobel S."/>
            <person name="Pertea M."/>
            <person name="Pop M."/>
            <person name="White O."/>
            <person name="Barton G.J."/>
            <person name="Carlow C.K.S."/>
            <person name="Crawford M.J."/>
            <person name="Daub J."/>
            <person name="Dimmic M.W."/>
            <person name="Estes C.F."/>
            <person name="Foster J.M."/>
            <person name="Ganatra M."/>
            <person name="Gregory W.F."/>
            <person name="Johnson N.M."/>
            <person name="Jin J."/>
            <person name="Komuniecki R."/>
            <person name="Korf I."/>
            <person name="Kumar S."/>
            <person name="Laney S."/>
            <person name="Li B.-W."/>
            <person name="Li W."/>
            <person name="Lindblom T.H."/>
            <person name="Lustigman S."/>
            <person name="Ma D."/>
            <person name="Maina C.V."/>
            <person name="Martin D.M."/>
            <person name="McCarter J.P."/>
            <person name="McReynolds L."/>
            <person name="Mitreva M."/>
            <person name="Nutman T.B."/>
            <person name="Parkinson J."/>
            <person name="Peregrin-Alvarez J.M."/>
            <person name="Poole C."/>
            <person name="Ren Q."/>
            <person name="Saunders L."/>
            <person name="Sluder A.E."/>
            <person name="Smith K."/>
            <person name="Stanke M."/>
            <person name="Unnasch T.R."/>
            <person name="Ware J."/>
            <person name="Wei A.D."/>
            <person name="Weil G."/>
            <person name="Williams D.J."/>
            <person name="Zhang Y."/>
            <person name="Williams S.A."/>
            <person name="Fraser-Liggett C."/>
            <person name="Slatko B."/>
            <person name="Blaxter M.L."/>
            <person name="Scott A.L."/>
        </authorList>
    </citation>
    <scope>NUCLEOTIDE SEQUENCE [LARGE SCALE GENOMIC DNA]</scope>
</reference>
<feature type="chain" id="PRO_0000403511" description="Flap endonuclease 1">
    <location>
        <begin position="1"/>
        <end position="378"/>
    </location>
</feature>
<feature type="region of interest" description="N-domain">
    <location>
        <begin position="1"/>
        <end position="104"/>
    </location>
</feature>
<feature type="region of interest" description="Disordered" evidence="2">
    <location>
        <begin position="90"/>
        <end position="113"/>
    </location>
</feature>
<feature type="region of interest" description="I-domain">
    <location>
        <begin position="122"/>
        <end position="253"/>
    </location>
</feature>
<feature type="region of interest" description="Interaction with PCNA" evidence="1">
    <location>
        <begin position="336"/>
        <end position="344"/>
    </location>
</feature>
<feature type="region of interest" description="Disordered" evidence="2">
    <location>
        <begin position="348"/>
        <end position="378"/>
    </location>
</feature>
<feature type="compositionally biased region" description="Basic and acidic residues" evidence="2">
    <location>
        <begin position="95"/>
        <end position="113"/>
    </location>
</feature>
<feature type="compositionally biased region" description="Basic and acidic residues" evidence="2">
    <location>
        <begin position="354"/>
        <end position="364"/>
    </location>
</feature>
<feature type="compositionally biased region" description="Basic residues" evidence="2">
    <location>
        <begin position="365"/>
        <end position="378"/>
    </location>
</feature>
<feature type="binding site" evidence="1">
    <location>
        <position position="34"/>
    </location>
    <ligand>
        <name>Mg(2+)</name>
        <dbReference type="ChEBI" id="CHEBI:18420"/>
        <label>1</label>
    </ligand>
</feature>
<feature type="binding site" evidence="1">
    <location>
        <position position="47"/>
    </location>
    <ligand>
        <name>DNA</name>
        <dbReference type="ChEBI" id="CHEBI:16991"/>
    </ligand>
</feature>
<feature type="binding site" evidence="1">
    <location>
        <position position="70"/>
    </location>
    <ligand>
        <name>DNA</name>
        <dbReference type="ChEBI" id="CHEBI:16991"/>
    </ligand>
</feature>
<feature type="binding site" evidence="1">
    <location>
        <position position="86"/>
    </location>
    <ligand>
        <name>Mg(2+)</name>
        <dbReference type="ChEBI" id="CHEBI:18420"/>
        <label>1</label>
    </ligand>
</feature>
<feature type="binding site" evidence="1">
    <location>
        <position position="158"/>
    </location>
    <ligand>
        <name>DNA</name>
        <dbReference type="ChEBI" id="CHEBI:16991"/>
    </ligand>
</feature>
<feature type="binding site" evidence="1">
    <location>
        <position position="158"/>
    </location>
    <ligand>
        <name>Mg(2+)</name>
        <dbReference type="ChEBI" id="CHEBI:18420"/>
        <label>1</label>
    </ligand>
</feature>
<feature type="binding site" evidence="1">
    <location>
        <position position="160"/>
    </location>
    <ligand>
        <name>Mg(2+)</name>
        <dbReference type="ChEBI" id="CHEBI:18420"/>
        <label>1</label>
    </ligand>
</feature>
<feature type="binding site" evidence="1">
    <location>
        <position position="179"/>
    </location>
    <ligand>
        <name>Mg(2+)</name>
        <dbReference type="ChEBI" id="CHEBI:18420"/>
        <label>2</label>
    </ligand>
</feature>
<feature type="binding site" evidence="1">
    <location>
        <position position="181"/>
    </location>
    <ligand>
        <name>Mg(2+)</name>
        <dbReference type="ChEBI" id="CHEBI:18420"/>
        <label>2</label>
    </ligand>
</feature>
<feature type="binding site" evidence="1">
    <location>
        <position position="231"/>
    </location>
    <ligand>
        <name>DNA</name>
        <dbReference type="ChEBI" id="CHEBI:16991"/>
    </ligand>
</feature>
<feature type="binding site" evidence="1">
    <location>
        <position position="233"/>
    </location>
    <ligand>
        <name>DNA</name>
        <dbReference type="ChEBI" id="CHEBI:16991"/>
    </ligand>
</feature>
<feature type="binding site" evidence="1">
    <location>
        <position position="233"/>
    </location>
    <ligand>
        <name>Mg(2+)</name>
        <dbReference type="ChEBI" id="CHEBI:18420"/>
        <label>2</label>
    </ligand>
</feature>